<evidence type="ECO:0000255" key="1">
    <source>
        <dbReference type="HAMAP-Rule" id="MF_01014"/>
    </source>
</evidence>
<accession>A4VRW0</accession>
<feature type="chain" id="PRO_1000063228" description="1-(5-phosphoribosyl)-5-[(5-phosphoribosylamino)methylideneamino] imidazole-4-carboxamide isomerase">
    <location>
        <begin position="1"/>
        <end position="247"/>
    </location>
</feature>
<feature type="active site" description="Proton acceptor" evidence="1">
    <location>
        <position position="8"/>
    </location>
</feature>
<feature type="active site" description="Proton donor" evidence="1">
    <location>
        <position position="130"/>
    </location>
</feature>
<reference key="1">
    <citation type="journal article" date="2008" name="Proc. Natl. Acad. Sci. U.S.A.">
        <title>Nitrogen fixation island and rhizosphere competence traits in the genome of root-associated Pseudomonas stutzeri A1501.</title>
        <authorList>
            <person name="Yan Y."/>
            <person name="Yang J."/>
            <person name="Dou Y."/>
            <person name="Chen M."/>
            <person name="Ping S."/>
            <person name="Peng J."/>
            <person name="Lu W."/>
            <person name="Zhang W."/>
            <person name="Yao Z."/>
            <person name="Li H."/>
            <person name="Liu W."/>
            <person name="He S."/>
            <person name="Geng L."/>
            <person name="Zhang X."/>
            <person name="Yang F."/>
            <person name="Yu H."/>
            <person name="Zhan Y."/>
            <person name="Li D."/>
            <person name="Lin Z."/>
            <person name="Wang Y."/>
            <person name="Elmerich C."/>
            <person name="Lin M."/>
            <person name="Jin Q."/>
        </authorList>
    </citation>
    <scope>NUCLEOTIDE SEQUENCE [LARGE SCALE GENOMIC DNA]</scope>
    <source>
        <strain>A1501</strain>
    </source>
</reference>
<dbReference type="EC" id="5.3.1.16" evidence="1"/>
<dbReference type="EMBL" id="CP000304">
    <property type="protein sequence ID" value="ABP81711.1"/>
    <property type="molecule type" value="Genomic_DNA"/>
</dbReference>
<dbReference type="RefSeq" id="WP_011915091.1">
    <property type="nucleotide sequence ID" value="NC_009434.1"/>
</dbReference>
<dbReference type="SMR" id="A4VRW0"/>
<dbReference type="GeneID" id="66823378"/>
<dbReference type="KEGG" id="psa:PST_4088"/>
<dbReference type="eggNOG" id="COG0106">
    <property type="taxonomic scope" value="Bacteria"/>
</dbReference>
<dbReference type="HOGENOM" id="CLU_048577_1_1_6"/>
<dbReference type="UniPathway" id="UPA00031">
    <property type="reaction ID" value="UER00009"/>
</dbReference>
<dbReference type="Proteomes" id="UP000000233">
    <property type="component" value="Chromosome"/>
</dbReference>
<dbReference type="GO" id="GO:0005737">
    <property type="term" value="C:cytoplasm"/>
    <property type="evidence" value="ECO:0007669"/>
    <property type="project" value="UniProtKB-SubCell"/>
</dbReference>
<dbReference type="GO" id="GO:0003949">
    <property type="term" value="F:1-(5-phosphoribosyl)-5-[(5-phosphoribosylamino)methylideneamino]imidazole-4-carboxamide isomerase activity"/>
    <property type="evidence" value="ECO:0007669"/>
    <property type="project" value="UniProtKB-UniRule"/>
</dbReference>
<dbReference type="GO" id="GO:0000105">
    <property type="term" value="P:L-histidine biosynthetic process"/>
    <property type="evidence" value="ECO:0007669"/>
    <property type="project" value="UniProtKB-UniRule"/>
</dbReference>
<dbReference type="GO" id="GO:0000162">
    <property type="term" value="P:L-tryptophan biosynthetic process"/>
    <property type="evidence" value="ECO:0007669"/>
    <property type="project" value="TreeGrafter"/>
</dbReference>
<dbReference type="CDD" id="cd04732">
    <property type="entry name" value="HisA"/>
    <property type="match status" value="1"/>
</dbReference>
<dbReference type="FunFam" id="3.20.20.70:FF:000009">
    <property type="entry name" value="1-(5-phosphoribosyl)-5-[(5-phosphoribosylamino)methylideneamino] imidazole-4-carboxamide isomerase"/>
    <property type="match status" value="1"/>
</dbReference>
<dbReference type="Gene3D" id="3.20.20.70">
    <property type="entry name" value="Aldolase class I"/>
    <property type="match status" value="1"/>
</dbReference>
<dbReference type="HAMAP" id="MF_01014">
    <property type="entry name" value="HisA"/>
    <property type="match status" value="1"/>
</dbReference>
<dbReference type="InterPro" id="IPR013785">
    <property type="entry name" value="Aldolase_TIM"/>
</dbReference>
<dbReference type="InterPro" id="IPR006062">
    <property type="entry name" value="His_biosynth"/>
</dbReference>
<dbReference type="InterPro" id="IPR006063">
    <property type="entry name" value="HisA_bact_arch"/>
</dbReference>
<dbReference type="InterPro" id="IPR044524">
    <property type="entry name" value="Isoase_HisA-like"/>
</dbReference>
<dbReference type="InterPro" id="IPR023016">
    <property type="entry name" value="Isoase_HisA-like_bact"/>
</dbReference>
<dbReference type="InterPro" id="IPR011060">
    <property type="entry name" value="RibuloseP-bd_barrel"/>
</dbReference>
<dbReference type="NCBIfam" id="TIGR00007">
    <property type="entry name" value="1-(5-phosphoribosyl)-5-[(5-phosphoribosylamino)methylideneamino]imidazole-4-carboxamide isomerase"/>
    <property type="match status" value="1"/>
</dbReference>
<dbReference type="PANTHER" id="PTHR43090">
    <property type="entry name" value="1-(5-PHOSPHORIBOSYL)-5-[(5-PHOSPHORIBOSYLAMINO)METHYLIDENEAMINO] IMIDAZOLE-4-CARBOXAMIDE ISOMERASE"/>
    <property type="match status" value="1"/>
</dbReference>
<dbReference type="PANTHER" id="PTHR43090:SF2">
    <property type="entry name" value="1-(5-PHOSPHORIBOSYL)-5-[(5-PHOSPHORIBOSYLAMINO)METHYLIDENEAMINO] IMIDAZOLE-4-CARBOXAMIDE ISOMERASE"/>
    <property type="match status" value="1"/>
</dbReference>
<dbReference type="Pfam" id="PF00977">
    <property type="entry name" value="His_biosynth"/>
    <property type="match status" value="1"/>
</dbReference>
<dbReference type="SUPFAM" id="SSF51366">
    <property type="entry name" value="Ribulose-phoshate binding barrel"/>
    <property type="match status" value="1"/>
</dbReference>
<protein>
    <recommendedName>
        <fullName evidence="1">1-(5-phosphoribosyl)-5-[(5-phosphoribosylamino)methylideneamino] imidazole-4-carboxamide isomerase</fullName>
        <ecNumber evidence="1">5.3.1.16</ecNumber>
    </recommendedName>
    <alternativeName>
        <fullName evidence="1">Phosphoribosylformimino-5-aminoimidazole carboxamide ribotide isomerase</fullName>
    </alternativeName>
</protein>
<keyword id="KW-0028">Amino-acid biosynthesis</keyword>
<keyword id="KW-0963">Cytoplasm</keyword>
<keyword id="KW-0368">Histidine biosynthesis</keyword>
<keyword id="KW-0413">Isomerase</keyword>
<keyword id="KW-1185">Reference proteome</keyword>
<gene>
    <name evidence="1" type="primary">hisA</name>
    <name type="ordered locus">PST_4088</name>
</gene>
<proteinExistence type="inferred from homology"/>
<name>HIS4_STUS1</name>
<comment type="catalytic activity">
    <reaction evidence="1">
        <text>1-(5-phospho-beta-D-ribosyl)-5-[(5-phospho-beta-D-ribosylamino)methylideneamino]imidazole-4-carboxamide = 5-[(5-phospho-1-deoxy-D-ribulos-1-ylimino)methylamino]-1-(5-phospho-beta-D-ribosyl)imidazole-4-carboxamide</text>
        <dbReference type="Rhea" id="RHEA:15469"/>
        <dbReference type="ChEBI" id="CHEBI:58435"/>
        <dbReference type="ChEBI" id="CHEBI:58525"/>
        <dbReference type="EC" id="5.3.1.16"/>
    </reaction>
</comment>
<comment type="pathway">
    <text evidence="1">Amino-acid biosynthesis; L-histidine biosynthesis; L-histidine from 5-phospho-alpha-D-ribose 1-diphosphate: step 4/9.</text>
</comment>
<comment type="subcellular location">
    <subcellularLocation>
        <location evidence="1">Cytoplasm</location>
    </subcellularLocation>
</comment>
<comment type="similarity">
    <text evidence="1">Belongs to the HisA/HisF family.</text>
</comment>
<sequence length="247" mass="26150">MLIIPAIDLKDGACVRLRQGLMDDATVFSDDPVAMAAKWVQAGCRRLHLVDLNGAFEGQPVNGEVVTAIAKRYPDLPIQIGGGIRTLETIEHYVRAGVSYVIIGTKAVKEPEFVTEACRAFPGKVIVGLDAKDGFVATDGWAEVSSVQAVDLARRFEADGVSAIVYTDIAKDGMMQGCNVEATVALANASRIPVIASGGIHNIGDIQKLLDTNTPGIIGAITGRAIYEGTLDVAEAQALCDLKLKDE</sequence>
<organism>
    <name type="scientific">Stutzerimonas stutzeri (strain A1501)</name>
    <name type="common">Pseudomonas stutzeri</name>
    <dbReference type="NCBI Taxonomy" id="379731"/>
    <lineage>
        <taxon>Bacteria</taxon>
        <taxon>Pseudomonadati</taxon>
        <taxon>Pseudomonadota</taxon>
        <taxon>Gammaproteobacteria</taxon>
        <taxon>Pseudomonadales</taxon>
        <taxon>Pseudomonadaceae</taxon>
        <taxon>Stutzerimonas</taxon>
    </lineage>
</organism>